<organism>
    <name type="scientific">Yersinia pestis</name>
    <dbReference type="NCBI Taxonomy" id="632"/>
    <lineage>
        <taxon>Bacteria</taxon>
        <taxon>Pseudomonadati</taxon>
        <taxon>Pseudomonadota</taxon>
        <taxon>Gammaproteobacteria</taxon>
        <taxon>Enterobacterales</taxon>
        <taxon>Yersiniaceae</taxon>
        <taxon>Yersinia</taxon>
    </lineage>
</organism>
<dbReference type="EC" id="2.1.2.3" evidence="1"/>
<dbReference type="EC" id="3.5.4.10" evidence="1"/>
<dbReference type="EMBL" id="AL590842">
    <property type="protein sequence ID" value="CAL22315.1"/>
    <property type="molecule type" value="Genomic_DNA"/>
</dbReference>
<dbReference type="EMBL" id="AE009952">
    <property type="protein sequence ID" value="AAM84091.1"/>
    <property type="status" value="ALT_INIT"/>
    <property type="molecule type" value="Genomic_DNA"/>
</dbReference>
<dbReference type="EMBL" id="AE017042">
    <property type="protein sequence ID" value="AAS63261.1"/>
    <property type="status" value="ALT_INIT"/>
    <property type="molecule type" value="Genomic_DNA"/>
</dbReference>
<dbReference type="PIR" id="AH0453">
    <property type="entry name" value="AH0453"/>
</dbReference>
<dbReference type="RefSeq" id="WP_002210692.1">
    <property type="nucleotide sequence ID" value="NZ_WUCM01000097.1"/>
</dbReference>
<dbReference type="RefSeq" id="YP_002348608.1">
    <property type="nucleotide sequence ID" value="NC_003143.1"/>
</dbReference>
<dbReference type="SMR" id="Q8ZAR3"/>
<dbReference type="IntAct" id="Q8ZAR3">
    <property type="interactions" value="4"/>
</dbReference>
<dbReference type="STRING" id="214092.YPO3728"/>
<dbReference type="PaxDb" id="214092-YPO3728"/>
<dbReference type="DNASU" id="1145449"/>
<dbReference type="EnsemblBacteria" id="AAS63261">
    <property type="protein sequence ID" value="AAS63261"/>
    <property type="gene ID" value="YP_3091"/>
</dbReference>
<dbReference type="GeneID" id="57974989"/>
<dbReference type="KEGG" id="ype:YPO3728"/>
<dbReference type="KEGG" id="ypk:y0502"/>
<dbReference type="KEGG" id="ypm:YP_3091"/>
<dbReference type="PATRIC" id="fig|214092.21.peg.4246"/>
<dbReference type="eggNOG" id="COG0138">
    <property type="taxonomic scope" value="Bacteria"/>
</dbReference>
<dbReference type="HOGENOM" id="CLU_016316_5_2_6"/>
<dbReference type="OMA" id="IKHNNPC"/>
<dbReference type="OrthoDB" id="9802065at2"/>
<dbReference type="UniPathway" id="UPA00074">
    <property type="reaction ID" value="UER00133"/>
</dbReference>
<dbReference type="UniPathway" id="UPA00074">
    <property type="reaction ID" value="UER00135"/>
</dbReference>
<dbReference type="Proteomes" id="UP000000815">
    <property type="component" value="Chromosome"/>
</dbReference>
<dbReference type="Proteomes" id="UP000001019">
    <property type="component" value="Chromosome"/>
</dbReference>
<dbReference type="Proteomes" id="UP000002490">
    <property type="component" value="Chromosome"/>
</dbReference>
<dbReference type="GO" id="GO:0005829">
    <property type="term" value="C:cytosol"/>
    <property type="evidence" value="ECO:0000318"/>
    <property type="project" value="GO_Central"/>
</dbReference>
<dbReference type="GO" id="GO:0003937">
    <property type="term" value="F:IMP cyclohydrolase activity"/>
    <property type="evidence" value="ECO:0000318"/>
    <property type="project" value="GO_Central"/>
</dbReference>
<dbReference type="GO" id="GO:0004643">
    <property type="term" value="F:phosphoribosylaminoimidazolecarboxamide formyltransferase activity"/>
    <property type="evidence" value="ECO:0000318"/>
    <property type="project" value="GO_Central"/>
</dbReference>
<dbReference type="GO" id="GO:0006189">
    <property type="term" value="P:'de novo' IMP biosynthetic process"/>
    <property type="evidence" value="ECO:0000318"/>
    <property type="project" value="GO_Central"/>
</dbReference>
<dbReference type="CDD" id="cd01421">
    <property type="entry name" value="IMPCH"/>
    <property type="match status" value="1"/>
</dbReference>
<dbReference type="FunFam" id="3.40.140.20:FF:000001">
    <property type="entry name" value="Bifunctional purine biosynthesis protein PurH"/>
    <property type="match status" value="1"/>
</dbReference>
<dbReference type="FunFam" id="3.40.140.20:FF:000002">
    <property type="entry name" value="Bifunctional purine biosynthesis protein PurH"/>
    <property type="match status" value="1"/>
</dbReference>
<dbReference type="FunFam" id="3.40.50.1380:FF:000001">
    <property type="entry name" value="Bifunctional purine biosynthesis protein PurH"/>
    <property type="match status" value="1"/>
</dbReference>
<dbReference type="Gene3D" id="3.40.140.20">
    <property type="match status" value="2"/>
</dbReference>
<dbReference type="Gene3D" id="3.40.50.1380">
    <property type="entry name" value="Methylglyoxal synthase-like domain"/>
    <property type="match status" value="1"/>
</dbReference>
<dbReference type="HAMAP" id="MF_00139">
    <property type="entry name" value="PurH"/>
    <property type="match status" value="1"/>
</dbReference>
<dbReference type="InterPro" id="IPR024051">
    <property type="entry name" value="AICAR_Tfase_dup_dom_sf"/>
</dbReference>
<dbReference type="InterPro" id="IPR016193">
    <property type="entry name" value="Cytidine_deaminase-like"/>
</dbReference>
<dbReference type="InterPro" id="IPR011607">
    <property type="entry name" value="MGS-like_dom"/>
</dbReference>
<dbReference type="InterPro" id="IPR036914">
    <property type="entry name" value="MGS-like_dom_sf"/>
</dbReference>
<dbReference type="InterPro" id="IPR002695">
    <property type="entry name" value="PurH-like"/>
</dbReference>
<dbReference type="NCBIfam" id="NF002049">
    <property type="entry name" value="PRK00881.1"/>
    <property type="match status" value="1"/>
</dbReference>
<dbReference type="NCBIfam" id="TIGR00355">
    <property type="entry name" value="purH"/>
    <property type="match status" value="1"/>
</dbReference>
<dbReference type="PANTHER" id="PTHR11692:SF0">
    <property type="entry name" value="BIFUNCTIONAL PURINE BIOSYNTHESIS PROTEIN ATIC"/>
    <property type="match status" value="1"/>
</dbReference>
<dbReference type="PANTHER" id="PTHR11692">
    <property type="entry name" value="BIFUNCTIONAL PURINE BIOSYNTHESIS PROTEIN PURH"/>
    <property type="match status" value="1"/>
</dbReference>
<dbReference type="Pfam" id="PF01808">
    <property type="entry name" value="AICARFT_IMPCHas"/>
    <property type="match status" value="1"/>
</dbReference>
<dbReference type="Pfam" id="PF02142">
    <property type="entry name" value="MGS"/>
    <property type="match status" value="1"/>
</dbReference>
<dbReference type="PIRSF" id="PIRSF000414">
    <property type="entry name" value="AICARFT_IMPCHas"/>
    <property type="match status" value="1"/>
</dbReference>
<dbReference type="SMART" id="SM00798">
    <property type="entry name" value="AICARFT_IMPCHas"/>
    <property type="match status" value="1"/>
</dbReference>
<dbReference type="SMART" id="SM00851">
    <property type="entry name" value="MGS"/>
    <property type="match status" value="1"/>
</dbReference>
<dbReference type="SUPFAM" id="SSF53927">
    <property type="entry name" value="Cytidine deaminase-like"/>
    <property type="match status" value="1"/>
</dbReference>
<dbReference type="SUPFAM" id="SSF52335">
    <property type="entry name" value="Methylglyoxal synthase-like"/>
    <property type="match status" value="1"/>
</dbReference>
<dbReference type="PROSITE" id="PS51855">
    <property type="entry name" value="MGS"/>
    <property type="match status" value="1"/>
</dbReference>
<evidence type="ECO:0000255" key="1">
    <source>
        <dbReference type="HAMAP-Rule" id="MF_00139"/>
    </source>
</evidence>
<evidence type="ECO:0000255" key="2">
    <source>
        <dbReference type="PROSITE-ProRule" id="PRU01202"/>
    </source>
</evidence>
<evidence type="ECO:0000305" key="3"/>
<reference key="1">
    <citation type="journal article" date="2001" name="Nature">
        <title>Genome sequence of Yersinia pestis, the causative agent of plague.</title>
        <authorList>
            <person name="Parkhill J."/>
            <person name="Wren B.W."/>
            <person name="Thomson N.R."/>
            <person name="Titball R.W."/>
            <person name="Holden M.T.G."/>
            <person name="Prentice M.B."/>
            <person name="Sebaihia M."/>
            <person name="James K.D."/>
            <person name="Churcher C.M."/>
            <person name="Mungall K.L."/>
            <person name="Baker S."/>
            <person name="Basham D."/>
            <person name="Bentley S.D."/>
            <person name="Brooks K."/>
            <person name="Cerdeno-Tarraga A.-M."/>
            <person name="Chillingworth T."/>
            <person name="Cronin A."/>
            <person name="Davies R.M."/>
            <person name="Davis P."/>
            <person name="Dougan G."/>
            <person name="Feltwell T."/>
            <person name="Hamlin N."/>
            <person name="Holroyd S."/>
            <person name="Jagels K."/>
            <person name="Karlyshev A.V."/>
            <person name="Leather S."/>
            <person name="Moule S."/>
            <person name="Oyston P.C.F."/>
            <person name="Quail M.A."/>
            <person name="Rutherford K.M."/>
            <person name="Simmonds M."/>
            <person name="Skelton J."/>
            <person name="Stevens K."/>
            <person name="Whitehead S."/>
            <person name="Barrell B.G."/>
        </authorList>
    </citation>
    <scope>NUCLEOTIDE SEQUENCE [LARGE SCALE GENOMIC DNA]</scope>
    <source>
        <strain>CO-92 / Biovar Orientalis</strain>
    </source>
</reference>
<reference key="2">
    <citation type="journal article" date="2002" name="J. Bacteriol.">
        <title>Genome sequence of Yersinia pestis KIM.</title>
        <authorList>
            <person name="Deng W."/>
            <person name="Burland V."/>
            <person name="Plunkett G. III"/>
            <person name="Boutin A."/>
            <person name="Mayhew G.F."/>
            <person name="Liss P."/>
            <person name="Perna N.T."/>
            <person name="Rose D.J."/>
            <person name="Mau B."/>
            <person name="Zhou S."/>
            <person name="Schwartz D.C."/>
            <person name="Fetherston J.D."/>
            <person name="Lindler L.E."/>
            <person name="Brubaker R.R."/>
            <person name="Plano G.V."/>
            <person name="Straley S.C."/>
            <person name="McDonough K.A."/>
            <person name="Nilles M.L."/>
            <person name="Matson J.S."/>
            <person name="Blattner F.R."/>
            <person name="Perry R.D."/>
        </authorList>
    </citation>
    <scope>NUCLEOTIDE SEQUENCE [LARGE SCALE GENOMIC DNA]</scope>
    <source>
        <strain>KIM10+ / Biovar Mediaevalis</strain>
    </source>
</reference>
<reference key="3">
    <citation type="journal article" date="2004" name="DNA Res.">
        <title>Complete genome sequence of Yersinia pestis strain 91001, an isolate avirulent to humans.</title>
        <authorList>
            <person name="Song Y."/>
            <person name="Tong Z."/>
            <person name="Wang J."/>
            <person name="Wang L."/>
            <person name="Guo Z."/>
            <person name="Han Y."/>
            <person name="Zhang J."/>
            <person name="Pei D."/>
            <person name="Zhou D."/>
            <person name="Qin H."/>
            <person name="Pang X."/>
            <person name="Han Y."/>
            <person name="Zhai J."/>
            <person name="Li M."/>
            <person name="Cui B."/>
            <person name="Qi Z."/>
            <person name="Jin L."/>
            <person name="Dai R."/>
            <person name="Chen F."/>
            <person name="Li S."/>
            <person name="Ye C."/>
            <person name="Du Z."/>
            <person name="Lin W."/>
            <person name="Wang J."/>
            <person name="Yu J."/>
            <person name="Yang H."/>
            <person name="Wang J."/>
            <person name="Huang P."/>
            <person name="Yang R."/>
        </authorList>
    </citation>
    <scope>NUCLEOTIDE SEQUENCE [LARGE SCALE GENOMIC DNA]</scope>
    <source>
        <strain>91001 / Biovar Mediaevalis</strain>
    </source>
</reference>
<protein>
    <recommendedName>
        <fullName evidence="1">Bifunctional purine biosynthesis protein PurH</fullName>
    </recommendedName>
    <domain>
        <recommendedName>
            <fullName evidence="1">Phosphoribosylaminoimidazolecarboxamide formyltransferase</fullName>
            <ecNumber evidence="1">2.1.2.3</ecNumber>
        </recommendedName>
        <alternativeName>
            <fullName evidence="1">AICAR transformylase</fullName>
        </alternativeName>
    </domain>
    <domain>
        <recommendedName>
            <fullName evidence="1">IMP cyclohydrolase</fullName>
            <ecNumber evidence="1">3.5.4.10</ecNumber>
        </recommendedName>
        <alternativeName>
            <fullName evidence="1">ATIC</fullName>
        </alternativeName>
        <alternativeName>
            <fullName evidence="1">IMP synthase</fullName>
        </alternativeName>
        <alternativeName>
            <fullName evidence="1">Inosinicase</fullName>
        </alternativeName>
    </domain>
</protein>
<proteinExistence type="inferred from homology"/>
<name>PUR9_YERPE</name>
<feature type="chain" id="PRO_0000192154" description="Bifunctional purine biosynthesis protein PurH">
    <location>
        <begin position="1"/>
        <end position="529"/>
    </location>
</feature>
<feature type="domain" description="MGS-like" evidence="2">
    <location>
        <begin position="1"/>
        <end position="148"/>
    </location>
</feature>
<comment type="catalytic activity">
    <reaction evidence="1">
        <text>(6R)-10-formyltetrahydrofolate + 5-amino-1-(5-phospho-beta-D-ribosyl)imidazole-4-carboxamide = 5-formamido-1-(5-phospho-D-ribosyl)imidazole-4-carboxamide + (6S)-5,6,7,8-tetrahydrofolate</text>
        <dbReference type="Rhea" id="RHEA:22192"/>
        <dbReference type="ChEBI" id="CHEBI:57453"/>
        <dbReference type="ChEBI" id="CHEBI:58467"/>
        <dbReference type="ChEBI" id="CHEBI:58475"/>
        <dbReference type="ChEBI" id="CHEBI:195366"/>
        <dbReference type="EC" id="2.1.2.3"/>
    </reaction>
</comment>
<comment type="catalytic activity">
    <reaction evidence="1">
        <text>IMP + H2O = 5-formamido-1-(5-phospho-D-ribosyl)imidazole-4-carboxamide</text>
        <dbReference type="Rhea" id="RHEA:18445"/>
        <dbReference type="ChEBI" id="CHEBI:15377"/>
        <dbReference type="ChEBI" id="CHEBI:58053"/>
        <dbReference type="ChEBI" id="CHEBI:58467"/>
        <dbReference type="EC" id="3.5.4.10"/>
    </reaction>
</comment>
<comment type="pathway">
    <text evidence="1">Purine metabolism; IMP biosynthesis via de novo pathway; 5-formamido-1-(5-phospho-D-ribosyl)imidazole-4-carboxamide from 5-amino-1-(5-phospho-D-ribosyl)imidazole-4-carboxamide (10-formyl THF route): step 1/1.</text>
</comment>
<comment type="pathway">
    <text evidence="1">Purine metabolism; IMP biosynthesis via de novo pathway; IMP from 5-formamido-1-(5-phospho-D-ribosyl)imidazole-4-carboxamide: step 1/1.</text>
</comment>
<comment type="domain">
    <text evidence="1">The IMP cyclohydrolase activity resides in the N-terminal region.</text>
</comment>
<comment type="similarity">
    <text evidence="1">Belongs to the PurH family.</text>
</comment>
<comment type="sequence caution" evidence="3">
    <conflict type="erroneous initiation">
        <sequence resource="EMBL-CDS" id="AAM84091"/>
    </conflict>
</comment>
<comment type="sequence caution" evidence="3">
    <conflict type="erroneous initiation">
        <sequence resource="EMBL-CDS" id="AAS63261"/>
    </conflict>
</comment>
<keyword id="KW-0378">Hydrolase</keyword>
<keyword id="KW-0511">Multifunctional enzyme</keyword>
<keyword id="KW-0658">Purine biosynthesis</keyword>
<keyword id="KW-1185">Reference proteome</keyword>
<keyword id="KW-0808">Transferase</keyword>
<gene>
    <name evidence="1" type="primary">purH</name>
    <name type="ordered locus">YPO3728</name>
    <name type="ordered locus">y0502</name>
    <name type="ordered locus">YP_3091</name>
</gene>
<sequence length="529" mass="57154">MQQRRPIRRALLSVSDKAGIIEFAQALSQRGIELLSTGGTARLLADAGLPVTEVSDYTGFPEMMDGRVKTLHPKVHGGILGRRGQDDGIMAQHGIQPIDIVVVNLYPFAQTVARPDCSLEDAVENIDIGGPTMVRSAAKNHKDVAIVVKSSDYPAIITELDNNDGSLTYPTRFNLAIKAFEHTAAYDSMIANYFGTLVPPYHGDTEQPSGHFPRTLNLNYIKKQDMRYGENSHQQAAFYIEEDVKEASVATAQQLQGKALSYNNIADTDAALECVKEFSEPACVIVKHANPCGVAIGDSILAAYERAYQTDPTSAFGGIIAFNRELDAATASAIISRQFVEVIIAPTVSSDALALLAAKQNVRVLTCGQWQARSAGLDFKRVNGGLLVQERDLGMVTAADLRVVSKRQPTEQELRDALFCWKVAKFVKSNAIVYARDNMTIGIGAGQMSRVYSAKIAGIKAADEGLEVAGSAMASDAFFPFRDGIDAAAAVGITCVIQPGGSIRDDEVIAAADEHSIAMIFTDMRHFRH</sequence>
<accession>Q8ZAR3</accession>
<accession>Q0WAT0</accession>
<accession>Q8D1H0</accession>